<feature type="chain" id="PRO_1000203552" description="Phosphoserine aminotransferase">
    <location>
        <begin position="1"/>
        <end position="362"/>
    </location>
</feature>
<feature type="binding site" evidence="1">
    <location>
        <position position="9"/>
    </location>
    <ligand>
        <name>L-glutamate</name>
        <dbReference type="ChEBI" id="CHEBI:29985"/>
    </ligand>
</feature>
<feature type="binding site" evidence="1">
    <location>
        <position position="42"/>
    </location>
    <ligand>
        <name>L-glutamate</name>
        <dbReference type="ChEBI" id="CHEBI:29985"/>
    </ligand>
</feature>
<feature type="binding site" evidence="1">
    <location>
        <begin position="76"/>
        <end position="77"/>
    </location>
    <ligand>
        <name>pyridoxal 5'-phosphate</name>
        <dbReference type="ChEBI" id="CHEBI:597326"/>
    </ligand>
</feature>
<feature type="binding site" evidence="1">
    <location>
        <position position="102"/>
    </location>
    <ligand>
        <name>pyridoxal 5'-phosphate</name>
        <dbReference type="ChEBI" id="CHEBI:597326"/>
    </ligand>
</feature>
<feature type="binding site" evidence="1">
    <location>
        <position position="153"/>
    </location>
    <ligand>
        <name>pyridoxal 5'-phosphate</name>
        <dbReference type="ChEBI" id="CHEBI:597326"/>
    </ligand>
</feature>
<feature type="binding site" evidence="1">
    <location>
        <position position="174"/>
    </location>
    <ligand>
        <name>pyridoxal 5'-phosphate</name>
        <dbReference type="ChEBI" id="CHEBI:597326"/>
    </ligand>
</feature>
<feature type="binding site" evidence="1">
    <location>
        <position position="197"/>
    </location>
    <ligand>
        <name>pyridoxal 5'-phosphate</name>
        <dbReference type="ChEBI" id="CHEBI:597326"/>
    </ligand>
</feature>
<feature type="binding site" evidence="1">
    <location>
        <begin position="239"/>
        <end position="240"/>
    </location>
    <ligand>
        <name>pyridoxal 5'-phosphate</name>
        <dbReference type="ChEBI" id="CHEBI:597326"/>
    </ligand>
</feature>
<feature type="modified residue" description="N6-(pyridoxal phosphate)lysine" evidence="1">
    <location>
        <position position="198"/>
    </location>
</feature>
<name>SERC_SALDC</name>
<accession>B5FQ49</accession>
<comment type="function">
    <text evidence="1">Catalyzes the reversible conversion of 3-phosphohydroxypyruvate to phosphoserine and of 3-hydroxy-2-oxo-4-phosphonooxybutanoate to phosphohydroxythreonine.</text>
</comment>
<comment type="catalytic activity">
    <reaction evidence="1">
        <text>O-phospho-L-serine + 2-oxoglutarate = 3-phosphooxypyruvate + L-glutamate</text>
        <dbReference type="Rhea" id="RHEA:14329"/>
        <dbReference type="ChEBI" id="CHEBI:16810"/>
        <dbReference type="ChEBI" id="CHEBI:18110"/>
        <dbReference type="ChEBI" id="CHEBI:29985"/>
        <dbReference type="ChEBI" id="CHEBI:57524"/>
        <dbReference type="EC" id="2.6.1.52"/>
    </reaction>
</comment>
<comment type="catalytic activity">
    <reaction evidence="1">
        <text>4-(phosphooxy)-L-threonine + 2-oxoglutarate = (R)-3-hydroxy-2-oxo-4-phosphooxybutanoate + L-glutamate</text>
        <dbReference type="Rhea" id="RHEA:16573"/>
        <dbReference type="ChEBI" id="CHEBI:16810"/>
        <dbReference type="ChEBI" id="CHEBI:29985"/>
        <dbReference type="ChEBI" id="CHEBI:58452"/>
        <dbReference type="ChEBI" id="CHEBI:58538"/>
        <dbReference type="EC" id="2.6.1.52"/>
    </reaction>
</comment>
<comment type="cofactor">
    <cofactor evidence="1">
        <name>pyridoxal 5'-phosphate</name>
        <dbReference type="ChEBI" id="CHEBI:597326"/>
    </cofactor>
    <text evidence="1">Binds 1 pyridoxal phosphate per subunit.</text>
</comment>
<comment type="pathway">
    <text evidence="1">Amino-acid biosynthesis; L-serine biosynthesis; L-serine from 3-phospho-D-glycerate: step 2/3.</text>
</comment>
<comment type="pathway">
    <text evidence="1">Cofactor biosynthesis; pyridoxine 5'-phosphate biosynthesis; pyridoxine 5'-phosphate from D-erythrose 4-phosphate: step 3/5.</text>
</comment>
<comment type="subunit">
    <text evidence="1">Homodimer.</text>
</comment>
<comment type="subcellular location">
    <subcellularLocation>
        <location evidence="1">Cytoplasm</location>
    </subcellularLocation>
</comment>
<comment type="similarity">
    <text evidence="1">Belongs to the class-V pyridoxal-phosphate-dependent aminotransferase family. SerC subfamily.</text>
</comment>
<proteinExistence type="inferred from homology"/>
<keyword id="KW-0028">Amino-acid biosynthesis</keyword>
<keyword id="KW-0032">Aminotransferase</keyword>
<keyword id="KW-0963">Cytoplasm</keyword>
<keyword id="KW-0663">Pyridoxal phosphate</keyword>
<keyword id="KW-0664">Pyridoxine biosynthesis</keyword>
<keyword id="KW-0718">Serine biosynthesis</keyword>
<keyword id="KW-0808">Transferase</keyword>
<gene>
    <name evidence="1" type="primary">serC</name>
    <name type="ordered locus">SeD_A1041</name>
</gene>
<organism>
    <name type="scientific">Salmonella dublin (strain CT_02021853)</name>
    <dbReference type="NCBI Taxonomy" id="439851"/>
    <lineage>
        <taxon>Bacteria</taxon>
        <taxon>Pseudomonadati</taxon>
        <taxon>Pseudomonadota</taxon>
        <taxon>Gammaproteobacteria</taxon>
        <taxon>Enterobacterales</taxon>
        <taxon>Enterobacteriaceae</taxon>
        <taxon>Salmonella</taxon>
    </lineage>
</organism>
<evidence type="ECO:0000255" key="1">
    <source>
        <dbReference type="HAMAP-Rule" id="MF_00160"/>
    </source>
</evidence>
<dbReference type="EC" id="2.6.1.52" evidence="1"/>
<dbReference type="EMBL" id="CP001144">
    <property type="protein sequence ID" value="ACH77342.1"/>
    <property type="molecule type" value="Genomic_DNA"/>
</dbReference>
<dbReference type="RefSeq" id="WP_000079590.1">
    <property type="nucleotide sequence ID" value="NC_011205.1"/>
</dbReference>
<dbReference type="SMR" id="B5FQ49"/>
<dbReference type="KEGG" id="sed:SeD_A1041"/>
<dbReference type="HOGENOM" id="CLU_034866_0_2_6"/>
<dbReference type="UniPathway" id="UPA00135">
    <property type="reaction ID" value="UER00197"/>
</dbReference>
<dbReference type="UniPathway" id="UPA00244">
    <property type="reaction ID" value="UER00311"/>
</dbReference>
<dbReference type="Proteomes" id="UP000008322">
    <property type="component" value="Chromosome"/>
</dbReference>
<dbReference type="GO" id="GO:0005737">
    <property type="term" value="C:cytoplasm"/>
    <property type="evidence" value="ECO:0007669"/>
    <property type="project" value="UniProtKB-SubCell"/>
</dbReference>
<dbReference type="GO" id="GO:0004648">
    <property type="term" value="F:O-phospho-L-serine:2-oxoglutarate aminotransferase activity"/>
    <property type="evidence" value="ECO:0007669"/>
    <property type="project" value="UniProtKB-UniRule"/>
</dbReference>
<dbReference type="GO" id="GO:0030170">
    <property type="term" value="F:pyridoxal phosphate binding"/>
    <property type="evidence" value="ECO:0007669"/>
    <property type="project" value="UniProtKB-UniRule"/>
</dbReference>
<dbReference type="GO" id="GO:0006564">
    <property type="term" value="P:L-serine biosynthetic process"/>
    <property type="evidence" value="ECO:0007669"/>
    <property type="project" value="UniProtKB-UniRule"/>
</dbReference>
<dbReference type="GO" id="GO:0008615">
    <property type="term" value="P:pyridoxine biosynthetic process"/>
    <property type="evidence" value="ECO:0007669"/>
    <property type="project" value="UniProtKB-UniRule"/>
</dbReference>
<dbReference type="CDD" id="cd00611">
    <property type="entry name" value="PSAT_like"/>
    <property type="match status" value="1"/>
</dbReference>
<dbReference type="FunFam" id="3.40.640.10:FF:000010">
    <property type="entry name" value="Phosphoserine aminotransferase"/>
    <property type="match status" value="1"/>
</dbReference>
<dbReference type="FunFam" id="3.90.1150.10:FF:000006">
    <property type="entry name" value="Phosphoserine aminotransferase"/>
    <property type="match status" value="1"/>
</dbReference>
<dbReference type="Gene3D" id="3.90.1150.10">
    <property type="entry name" value="Aspartate Aminotransferase, domain 1"/>
    <property type="match status" value="1"/>
</dbReference>
<dbReference type="Gene3D" id="3.40.640.10">
    <property type="entry name" value="Type I PLP-dependent aspartate aminotransferase-like (Major domain)"/>
    <property type="match status" value="1"/>
</dbReference>
<dbReference type="HAMAP" id="MF_00160">
    <property type="entry name" value="SerC_aminotrans_5"/>
    <property type="match status" value="1"/>
</dbReference>
<dbReference type="InterPro" id="IPR000192">
    <property type="entry name" value="Aminotrans_V_dom"/>
</dbReference>
<dbReference type="InterPro" id="IPR020578">
    <property type="entry name" value="Aminotrans_V_PyrdxlP_BS"/>
</dbReference>
<dbReference type="InterPro" id="IPR022278">
    <property type="entry name" value="Pser_aminoTfrase"/>
</dbReference>
<dbReference type="InterPro" id="IPR015424">
    <property type="entry name" value="PyrdxlP-dep_Trfase"/>
</dbReference>
<dbReference type="InterPro" id="IPR015421">
    <property type="entry name" value="PyrdxlP-dep_Trfase_major"/>
</dbReference>
<dbReference type="InterPro" id="IPR015422">
    <property type="entry name" value="PyrdxlP-dep_Trfase_small"/>
</dbReference>
<dbReference type="NCBIfam" id="NF003764">
    <property type="entry name" value="PRK05355.1"/>
    <property type="match status" value="1"/>
</dbReference>
<dbReference type="NCBIfam" id="TIGR01364">
    <property type="entry name" value="serC_1"/>
    <property type="match status" value="1"/>
</dbReference>
<dbReference type="PANTHER" id="PTHR43247">
    <property type="entry name" value="PHOSPHOSERINE AMINOTRANSFERASE"/>
    <property type="match status" value="1"/>
</dbReference>
<dbReference type="PANTHER" id="PTHR43247:SF1">
    <property type="entry name" value="PHOSPHOSERINE AMINOTRANSFERASE"/>
    <property type="match status" value="1"/>
</dbReference>
<dbReference type="Pfam" id="PF00266">
    <property type="entry name" value="Aminotran_5"/>
    <property type="match status" value="1"/>
</dbReference>
<dbReference type="PIRSF" id="PIRSF000525">
    <property type="entry name" value="SerC"/>
    <property type="match status" value="1"/>
</dbReference>
<dbReference type="SUPFAM" id="SSF53383">
    <property type="entry name" value="PLP-dependent transferases"/>
    <property type="match status" value="1"/>
</dbReference>
<dbReference type="PROSITE" id="PS00595">
    <property type="entry name" value="AA_TRANSFER_CLASS_5"/>
    <property type="match status" value="1"/>
</dbReference>
<reference key="1">
    <citation type="journal article" date="2011" name="J. Bacteriol.">
        <title>Comparative genomics of 28 Salmonella enterica isolates: evidence for CRISPR-mediated adaptive sublineage evolution.</title>
        <authorList>
            <person name="Fricke W.F."/>
            <person name="Mammel M.K."/>
            <person name="McDermott P.F."/>
            <person name="Tartera C."/>
            <person name="White D.G."/>
            <person name="Leclerc J.E."/>
            <person name="Ravel J."/>
            <person name="Cebula T.A."/>
        </authorList>
    </citation>
    <scope>NUCLEOTIDE SEQUENCE [LARGE SCALE GENOMIC DNA]</scope>
    <source>
        <strain>CT_02021853</strain>
    </source>
</reference>
<protein>
    <recommendedName>
        <fullName evidence="1">Phosphoserine aminotransferase</fullName>
        <ecNumber evidence="1">2.6.1.52</ecNumber>
    </recommendedName>
    <alternativeName>
        <fullName evidence="1">Phosphohydroxythreonine aminotransferase</fullName>
        <shortName evidence="1">PSAT</shortName>
    </alternativeName>
</protein>
<sequence length="362" mass="39855">MAQVFNFSSGPAMLPAEVLKLAQQELRDWHGLGTSVMEISHRGKEFIQVAEEAEQDFRDLLNIPSNYKVLFCHGGGRGQFAGVPLNLLGDKTTADYVDAGYWAASAIKEAKKYCAPQIIDAKITVDGKRAVKPMREWQLSDNAAYLHYCPNETIDGIAIDETPDFGPEVVVTADFSSTILSAPLDVSRYGVIYAGAQKNIGPAGLTLVIVREDLLGKAHESCPSILDYTVLNDNDSMFNTPPTFAWYLSGLVFKWLKAQGGVAAMHKINQQKAELLYGVIDNSDFYRNDVAQANRSRMNVPFQLADNALDKVFLEESFAAGLHALKGHRVVGGMRASIYNAMPIEGVKALTDFMIDFERRHG</sequence>